<evidence type="ECO:0000250" key="1"/>
<evidence type="ECO:0000305" key="2"/>
<proteinExistence type="inferred from homology"/>
<keyword id="KW-0012">Acyltransferase</keyword>
<keyword id="KW-0444">Lipid biosynthesis</keyword>
<keyword id="KW-0443">Lipid metabolism</keyword>
<keyword id="KW-0594">Phospholipid biosynthesis</keyword>
<keyword id="KW-1208">Phospholipid metabolism</keyword>
<keyword id="KW-1185">Reference proteome</keyword>
<keyword id="KW-0808">Transferase</keyword>
<dbReference type="EC" id="2.3.1.51"/>
<dbReference type="EMBL" id="U00089">
    <property type="protein sequence ID" value="AAB96185.1"/>
    <property type="molecule type" value="Genomic_DNA"/>
</dbReference>
<dbReference type="PIR" id="S73863">
    <property type="entry name" value="S73863"/>
</dbReference>
<dbReference type="RefSeq" id="NP_109987.1">
    <property type="nucleotide sequence ID" value="NC_000912.1"/>
</dbReference>
<dbReference type="RefSeq" id="WP_010874656.1">
    <property type="nucleotide sequence ID" value="NZ_OU342337.1"/>
</dbReference>
<dbReference type="SMR" id="P75479"/>
<dbReference type="STRING" id="272634.MPN_299"/>
<dbReference type="EnsemblBacteria" id="AAB96185">
    <property type="protein sequence ID" value="AAB96185"/>
    <property type="gene ID" value="MPN_299"/>
</dbReference>
<dbReference type="KEGG" id="mpn:MPN_299"/>
<dbReference type="PATRIC" id="fig|272634.6.peg.323"/>
<dbReference type="HOGENOM" id="CLU_027938_6_1_14"/>
<dbReference type="OrthoDB" id="9803035at2"/>
<dbReference type="BioCyc" id="MPNE272634:G1GJ3-468-MONOMER"/>
<dbReference type="UniPathway" id="UPA00557">
    <property type="reaction ID" value="UER00613"/>
</dbReference>
<dbReference type="Proteomes" id="UP000000808">
    <property type="component" value="Chromosome"/>
</dbReference>
<dbReference type="GO" id="GO:0016020">
    <property type="term" value="C:membrane"/>
    <property type="evidence" value="ECO:0007669"/>
    <property type="project" value="InterPro"/>
</dbReference>
<dbReference type="GO" id="GO:0003841">
    <property type="term" value="F:1-acylglycerol-3-phosphate O-acyltransferase activity"/>
    <property type="evidence" value="ECO:0007669"/>
    <property type="project" value="UniProtKB-EC"/>
</dbReference>
<dbReference type="GO" id="GO:0016024">
    <property type="term" value="P:CDP-diacylglycerol biosynthetic process"/>
    <property type="evidence" value="ECO:0007669"/>
    <property type="project" value="UniProtKB-UniPathway"/>
</dbReference>
<dbReference type="GO" id="GO:0006654">
    <property type="term" value="P:phosphatidic acid biosynthetic process"/>
    <property type="evidence" value="ECO:0007669"/>
    <property type="project" value="TreeGrafter"/>
</dbReference>
<dbReference type="CDD" id="cd07989">
    <property type="entry name" value="LPLAT_AGPAT-like"/>
    <property type="match status" value="1"/>
</dbReference>
<dbReference type="InterPro" id="IPR004552">
    <property type="entry name" value="AGP_acyltrans"/>
</dbReference>
<dbReference type="InterPro" id="IPR002123">
    <property type="entry name" value="Plipid/glycerol_acylTrfase"/>
</dbReference>
<dbReference type="NCBIfam" id="TIGR00530">
    <property type="entry name" value="AGP_acyltrn"/>
    <property type="match status" value="1"/>
</dbReference>
<dbReference type="PANTHER" id="PTHR10434">
    <property type="entry name" value="1-ACYL-SN-GLYCEROL-3-PHOSPHATE ACYLTRANSFERASE"/>
    <property type="match status" value="1"/>
</dbReference>
<dbReference type="PANTHER" id="PTHR10434:SF64">
    <property type="entry name" value="1-ACYL-SN-GLYCEROL-3-PHOSPHATE ACYLTRANSFERASE-RELATED"/>
    <property type="match status" value="1"/>
</dbReference>
<dbReference type="Pfam" id="PF01553">
    <property type="entry name" value="Acyltransferase"/>
    <property type="match status" value="1"/>
</dbReference>
<dbReference type="SMART" id="SM00563">
    <property type="entry name" value="PlsC"/>
    <property type="match status" value="1"/>
</dbReference>
<dbReference type="SUPFAM" id="SSF69593">
    <property type="entry name" value="Glycerol-3-phosphate (1)-acyltransferase"/>
    <property type="match status" value="1"/>
</dbReference>
<comment type="function">
    <text>Converts lysophosphatidic acid (LPA) into phosphatidic acid by incorporating acyl moiety at the 2 position.</text>
</comment>
<comment type="catalytic activity">
    <reaction>
        <text>a 1-acyl-sn-glycero-3-phosphate + an acyl-CoA = a 1,2-diacyl-sn-glycero-3-phosphate + CoA</text>
        <dbReference type="Rhea" id="RHEA:19709"/>
        <dbReference type="ChEBI" id="CHEBI:57287"/>
        <dbReference type="ChEBI" id="CHEBI:57970"/>
        <dbReference type="ChEBI" id="CHEBI:58342"/>
        <dbReference type="ChEBI" id="CHEBI:58608"/>
        <dbReference type="EC" id="2.3.1.51"/>
    </reaction>
</comment>
<comment type="pathway">
    <text>Phospholipid metabolism; CDP-diacylglycerol biosynthesis; CDP-diacylglycerol from sn-glycerol 3-phosphate: step 2/3.</text>
</comment>
<comment type="domain">
    <text evidence="1">The HXXXXD motif is essential for acyltransferase activity and may constitute the binding site for the phosphate moiety of the glycerol-3-phosphate.</text>
</comment>
<comment type="similarity">
    <text evidence="2">Belongs to the 1-acyl-sn-glycerol-3-phosphate acyltransferase family.</text>
</comment>
<protein>
    <recommendedName>
        <fullName>Probable 1-acyl-sn-glycerol-3-phosphate acyltransferase</fullName>
        <shortName>1-AGP acyltransferase</shortName>
        <shortName>1-AGPAT</shortName>
        <ecNumber>2.3.1.51</ecNumber>
    </recommendedName>
    <alternativeName>
        <fullName>Lysophosphatidic acid acyltransferase</fullName>
        <shortName>LPAAT</shortName>
    </alternativeName>
</protein>
<gene>
    <name type="primary">plsC</name>
    <name type="ordered locus">MPN_299</name>
    <name type="ORF">MP537</name>
</gene>
<name>PLSC_MYCPN</name>
<accession>P75479</accession>
<reference key="1">
    <citation type="journal article" date="1996" name="Nucleic Acids Res.">
        <title>Complete sequence analysis of the genome of the bacterium Mycoplasma pneumoniae.</title>
        <authorList>
            <person name="Himmelreich R."/>
            <person name="Hilbert H."/>
            <person name="Plagens H."/>
            <person name="Pirkl E."/>
            <person name="Li B.-C."/>
            <person name="Herrmann R."/>
        </authorList>
    </citation>
    <scope>NUCLEOTIDE SEQUENCE [LARGE SCALE GENOMIC DNA]</scope>
    <source>
        <strain>ATCC 29342 / M129 / Subtype 1</strain>
    </source>
</reference>
<organism>
    <name type="scientific">Mycoplasma pneumoniae (strain ATCC 29342 / M129 / Subtype 1)</name>
    <name type="common">Mycoplasmoides pneumoniae</name>
    <dbReference type="NCBI Taxonomy" id="272634"/>
    <lineage>
        <taxon>Bacteria</taxon>
        <taxon>Bacillati</taxon>
        <taxon>Mycoplasmatota</taxon>
        <taxon>Mycoplasmoidales</taxon>
        <taxon>Mycoplasmoidaceae</taxon>
        <taxon>Mycoplasmoides</taxon>
    </lineage>
</organism>
<sequence>MKKLTQAFLRFCLRFLQLLSLVLVLPVFVLMLISSLISAKNYESIPENYPPEIRFKKVYRLVSLFLYIKGVKVVIVNPENVPKKAVLVVANHKSNLDPLILIKAFGKTEGVPPLTFIAKIELQDTWLFKIMKLIDCVFIDRKNLRQMAASLEQQQQIIRQGTALCVFPEGTRVLSRQIGEFKSGALKVAYNAFVPIVPLTIVGSMGHMESKKRLQKAQVERDRGYKIQVIFNTPINPINFNQIDSQNVANNVWREISQTYAQYCQD</sequence>
<feature type="chain" id="PRO_0000208173" description="Probable 1-acyl-sn-glycerol-3-phosphate acyltransferase">
    <location>
        <begin position="1"/>
        <end position="266"/>
    </location>
</feature>
<feature type="short sequence motif" description="HXXXXD motif">
    <location>
        <begin position="92"/>
        <end position="97"/>
    </location>
</feature>